<evidence type="ECO:0000250" key="1">
    <source>
        <dbReference type="UniProtKB" id="P53045"/>
    </source>
</evidence>
<evidence type="ECO:0000250" key="2">
    <source>
        <dbReference type="UniProtKB" id="Q8L7W5"/>
    </source>
</evidence>
<evidence type="ECO:0000255" key="3"/>
<evidence type="ECO:0000269" key="4">
    <source>
    </source>
</evidence>
<evidence type="ECO:0000269" key="5">
    <source>
    </source>
</evidence>
<evidence type="ECO:0000303" key="6">
    <source>
    </source>
</evidence>
<evidence type="ECO:0000305" key="7"/>
<evidence type="ECO:0000312" key="8">
    <source>
        <dbReference type="Araport" id="AT4G22756"/>
    </source>
</evidence>
<evidence type="ECO:0000312" key="9">
    <source>
        <dbReference type="EMBL" id="AL021635"/>
    </source>
</evidence>
<accession>Q1EC69</accession>
<accession>Q8GT72</accession>
<accession>Q8LAD9</accession>
<organism>
    <name type="scientific">Arabidopsis thaliana</name>
    <name type="common">Mouse-ear cress</name>
    <dbReference type="NCBI Taxonomy" id="3702"/>
    <lineage>
        <taxon>Eukaryota</taxon>
        <taxon>Viridiplantae</taxon>
        <taxon>Streptophyta</taxon>
        <taxon>Embryophyta</taxon>
        <taxon>Tracheophyta</taxon>
        <taxon>Spermatophyta</taxon>
        <taxon>Magnoliopsida</taxon>
        <taxon>eudicotyledons</taxon>
        <taxon>Gunneridae</taxon>
        <taxon>Pentapetalae</taxon>
        <taxon>rosids</taxon>
        <taxon>malvids</taxon>
        <taxon>Brassicales</taxon>
        <taxon>Brassicaceae</taxon>
        <taxon>Camelineae</taxon>
        <taxon>Arabidopsis</taxon>
    </lineage>
</organism>
<protein>
    <recommendedName>
        <fullName evidence="6">Methylsterol monooxygenase 1-2</fullName>
        <ecNumber evidence="2">1.14.18.10</ecNumber>
        <ecNumber evidence="2">1.14.18.9</ecNumber>
    </recommendedName>
    <alternativeName>
        <fullName evidence="6">Sterol 4-alpha-methyl-oxidase 1-2</fullName>
        <shortName evidence="6">AtSMO1-2</shortName>
    </alternativeName>
</protein>
<sequence length="299" mass="34989">MIPYATIEEASIALSRNLTWLETLWFDYSATKSDYYLYCHNILFLFLIFSLVPLPLVFIESSQSTSDLFNRYKIQPKVKNSFSSMFKCYKDVMKMFILVVGPLQLVSYPSIQMIEIRSGLPLPSCMEIVAQLVVYFLVEDYTNYWVHRFFHCKWGYEKFHHIHHEYTAPIGYAAPYAHWAEVLLLGIPTFLGPAIAPGHMITFWLWIALRQIEAIETHSGYDFPWSLTKYIPFYGGAEYHDYHHYVGGQSQSNFASVFTYCDYIYGTDKGYRFQKKLLQQMKEKSKKSNKLVNGGEKFD</sequence>
<reference key="1">
    <citation type="journal article" date="2004" name="Biochem. J.">
        <title>Plant sterol biosynthesis: identification of two distinct families of sterol 4alpha-methyl oxidases.</title>
        <authorList>
            <person name="Darnet S."/>
            <person name="Rahier A."/>
        </authorList>
    </citation>
    <scope>NUCLEOTIDE SEQUENCE [MRNA]</scope>
    <scope>GENE FAMILY</scope>
    <scope>NOMENCLATURE</scope>
    <source>
        <strain>cv. Columbia</strain>
        <tissue>Silique</tissue>
    </source>
</reference>
<reference key="2">
    <citation type="journal article" date="1999" name="Nature">
        <title>Sequence and analysis of chromosome 4 of the plant Arabidopsis thaliana.</title>
        <authorList>
            <person name="Mayer K.F.X."/>
            <person name="Schueller C."/>
            <person name="Wambutt R."/>
            <person name="Murphy G."/>
            <person name="Volckaert G."/>
            <person name="Pohl T."/>
            <person name="Duesterhoeft A."/>
            <person name="Stiekema W."/>
            <person name="Entian K.-D."/>
            <person name="Terryn N."/>
            <person name="Harris B."/>
            <person name="Ansorge W."/>
            <person name="Brandt P."/>
            <person name="Grivell L.A."/>
            <person name="Rieger M."/>
            <person name="Weichselgartner M."/>
            <person name="de Simone V."/>
            <person name="Obermaier B."/>
            <person name="Mache R."/>
            <person name="Mueller M."/>
            <person name="Kreis M."/>
            <person name="Delseny M."/>
            <person name="Puigdomenech P."/>
            <person name="Watson M."/>
            <person name="Schmidtheini T."/>
            <person name="Reichert B."/>
            <person name="Portetelle D."/>
            <person name="Perez-Alonso M."/>
            <person name="Boutry M."/>
            <person name="Bancroft I."/>
            <person name="Vos P."/>
            <person name="Hoheisel J."/>
            <person name="Zimmermann W."/>
            <person name="Wedler H."/>
            <person name="Ridley P."/>
            <person name="Langham S.-A."/>
            <person name="McCullagh B."/>
            <person name="Bilham L."/>
            <person name="Robben J."/>
            <person name="van der Schueren J."/>
            <person name="Grymonprez B."/>
            <person name="Chuang Y.-J."/>
            <person name="Vandenbussche F."/>
            <person name="Braeken M."/>
            <person name="Weltjens I."/>
            <person name="Voet M."/>
            <person name="Bastiaens I."/>
            <person name="Aert R."/>
            <person name="Defoor E."/>
            <person name="Weitzenegger T."/>
            <person name="Bothe G."/>
            <person name="Ramsperger U."/>
            <person name="Hilbert H."/>
            <person name="Braun M."/>
            <person name="Holzer E."/>
            <person name="Brandt A."/>
            <person name="Peters S."/>
            <person name="van Staveren M."/>
            <person name="Dirkse W."/>
            <person name="Mooijman P."/>
            <person name="Klein Lankhorst R."/>
            <person name="Rose M."/>
            <person name="Hauf J."/>
            <person name="Koetter P."/>
            <person name="Berneiser S."/>
            <person name="Hempel S."/>
            <person name="Feldpausch M."/>
            <person name="Lamberth S."/>
            <person name="Van den Daele H."/>
            <person name="De Keyser A."/>
            <person name="Buysshaert C."/>
            <person name="Gielen J."/>
            <person name="Villarroel R."/>
            <person name="De Clercq R."/>
            <person name="van Montagu M."/>
            <person name="Rogers J."/>
            <person name="Cronin A."/>
            <person name="Quail M.A."/>
            <person name="Bray-Allen S."/>
            <person name="Clark L."/>
            <person name="Doggett J."/>
            <person name="Hall S."/>
            <person name="Kay M."/>
            <person name="Lennard N."/>
            <person name="McLay K."/>
            <person name="Mayes R."/>
            <person name="Pettett A."/>
            <person name="Rajandream M.A."/>
            <person name="Lyne M."/>
            <person name="Benes V."/>
            <person name="Rechmann S."/>
            <person name="Borkova D."/>
            <person name="Bloecker H."/>
            <person name="Scharfe M."/>
            <person name="Grimm M."/>
            <person name="Loehnert T.-H."/>
            <person name="Dose S."/>
            <person name="de Haan M."/>
            <person name="Maarse A.C."/>
            <person name="Schaefer M."/>
            <person name="Mueller-Auer S."/>
            <person name="Gabel C."/>
            <person name="Fuchs M."/>
            <person name="Fartmann B."/>
            <person name="Granderath K."/>
            <person name="Dauner D."/>
            <person name="Herzl A."/>
            <person name="Neumann S."/>
            <person name="Argiriou A."/>
            <person name="Vitale D."/>
            <person name="Liguori R."/>
            <person name="Piravandi E."/>
            <person name="Massenet O."/>
            <person name="Quigley F."/>
            <person name="Clabauld G."/>
            <person name="Muendlein A."/>
            <person name="Felber R."/>
            <person name="Schnabl S."/>
            <person name="Hiller R."/>
            <person name="Schmidt W."/>
            <person name="Lecharny A."/>
            <person name="Aubourg S."/>
            <person name="Chefdor F."/>
            <person name="Cooke R."/>
            <person name="Berger C."/>
            <person name="Monfort A."/>
            <person name="Casacuberta E."/>
            <person name="Gibbons T."/>
            <person name="Weber N."/>
            <person name="Vandenbol M."/>
            <person name="Bargues M."/>
            <person name="Terol J."/>
            <person name="Torres A."/>
            <person name="Perez-Perez A."/>
            <person name="Purnelle B."/>
            <person name="Bent E."/>
            <person name="Johnson S."/>
            <person name="Tacon D."/>
            <person name="Jesse T."/>
            <person name="Heijnen L."/>
            <person name="Schwarz S."/>
            <person name="Scholler P."/>
            <person name="Heber S."/>
            <person name="Francs P."/>
            <person name="Bielke C."/>
            <person name="Frishman D."/>
            <person name="Haase D."/>
            <person name="Lemcke K."/>
            <person name="Mewes H.-W."/>
            <person name="Stocker S."/>
            <person name="Zaccaria P."/>
            <person name="Bevan M."/>
            <person name="Wilson R.K."/>
            <person name="de la Bastide M."/>
            <person name="Habermann K."/>
            <person name="Parnell L."/>
            <person name="Dedhia N."/>
            <person name="Gnoj L."/>
            <person name="Schutz K."/>
            <person name="Huang E."/>
            <person name="Spiegel L."/>
            <person name="Sekhon M."/>
            <person name="Murray J."/>
            <person name="Sheet P."/>
            <person name="Cordes M."/>
            <person name="Abu-Threideh J."/>
            <person name="Stoneking T."/>
            <person name="Kalicki J."/>
            <person name="Graves T."/>
            <person name="Harmon G."/>
            <person name="Edwards J."/>
            <person name="Latreille P."/>
            <person name="Courtney L."/>
            <person name="Cloud J."/>
            <person name="Abbott A."/>
            <person name="Scott K."/>
            <person name="Johnson D."/>
            <person name="Minx P."/>
            <person name="Bentley D."/>
            <person name="Fulton B."/>
            <person name="Miller N."/>
            <person name="Greco T."/>
            <person name="Kemp K."/>
            <person name="Kramer J."/>
            <person name="Fulton L."/>
            <person name="Mardis E."/>
            <person name="Dante M."/>
            <person name="Pepin K."/>
            <person name="Hillier L.W."/>
            <person name="Nelson J."/>
            <person name="Spieth J."/>
            <person name="Ryan E."/>
            <person name="Andrews S."/>
            <person name="Geisel C."/>
            <person name="Layman D."/>
            <person name="Du H."/>
            <person name="Ali J."/>
            <person name="Berghoff A."/>
            <person name="Jones K."/>
            <person name="Drone K."/>
            <person name="Cotton M."/>
            <person name="Joshu C."/>
            <person name="Antonoiu B."/>
            <person name="Zidanic M."/>
            <person name="Strong C."/>
            <person name="Sun H."/>
            <person name="Lamar B."/>
            <person name="Yordan C."/>
            <person name="Ma P."/>
            <person name="Zhong J."/>
            <person name="Preston R."/>
            <person name="Vil D."/>
            <person name="Shekher M."/>
            <person name="Matero A."/>
            <person name="Shah R."/>
            <person name="Swaby I.K."/>
            <person name="O'Shaughnessy A."/>
            <person name="Rodriguez M."/>
            <person name="Hoffman J."/>
            <person name="Till S."/>
            <person name="Granat S."/>
            <person name="Shohdy N."/>
            <person name="Hasegawa A."/>
            <person name="Hameed A."/>
            <person name="Lodhi M."/>
            <person name="Johnson A."/>
            <person name="Chen E."/>
            <person name="Marra M.A."/>
            <person name="Martienssen R."/>
            <person name="McCombie W.R."/>
        </authorList>
    </citation>
    <scope>NUCLEOTIDE SEQUENCE [LARGE SCALE GENOMIC DNA]</scope>
    <source>
        <strain>cv. Columbia</strain>
    </source>
</reference>
<reference key="3">
    <citation type="journal article" date="2017" name="Plant J.">
        <title>Araport11: a complete reannotation of the Arabidopsis thaliana reference genome.</title>
        <authorList>
            <person name="Cheng C.Y."/>
            <person name="Krishnakumar V."/>
            <person name="Chan A.P."/>
            <person name="Thibaud-Nissen F."/>
            <person name="Schobel S."/>
            <person name="Town C.D."/>
        </authorList>
    </citation>
    <scope>GENOME REANNOTATION</scope>
    <source>
        <strain>cv. Columbia</strain>
    </source>
</reference>
<reference key="4">
    <citation type="submission" date="2002-03" db="EMBL/GenBank/DDBJ databases">
        <title>Full-length cDNA from Arabidopsis thaliana.</title>
        <authorList>
            <person name="Brover V.V."/>
            <person name="Troukhan M.E."/>
            <person name="Alexandrov N.A."/>
            <person name="Lu Y.-P."/>
            <person name="Flavell R.B."/>
            <person name="Feldmann K.A."/>
        </authorList>
    </citation>
    <scope>NUCLEOTIDE SEQUENCE [LARGE SCALE MRNA]</scope>
</reference>
<reference key="5">
    <citation type="submission" date="2006-06" db="EMBL/GenBank/DDBJ databases">
        <title>Arabidopsis ORF clones.</title>
        <authorList>
            <person name="Quinitio C."/>
            <person name="Chen H."/>
            <person name="Kim C.J."/>
            <person name="Shinn P."/>
            <person name="Ecker J.R."/>
        </authorList>
    </citation>
    <scope>NUCLEOTIDE SEQUENCE [LARGE SCALE MRNA]</scope>
    <source>
        <strain>cv. Columbia</strain>
    </source>
</reference>
<reference key="6">
    <citation type="submission" date="2006-07" db="EMBL/GenBank/DDBJ databases">
        <title>Large-scale analysis of RIKEN Arabidopsis full-length (RAFL) cDNAs.</title>
        <authorList>
            <person name="Totoki Y."/>
            <person name="Seki M."/>
            <person name="Ishida J."/>
            <person name="Nakajima M."/>
            <person name="Enju A."/>
            <person name="Kamiya A."/>
            <person name="Narusaka M."/>
            <person name="Shin-i T."/>
            <person name="Nakagawa M."/>
            <person name="Sakamoto N."/>
            <person name="Oishi K."/>
            <person name="Kohara Y."/>
            <person name="Kobayashi M."/>
            <person name="Toyoda A."/>
            <person name="Sakaki Y."/>
            <person name="Sakurai T."/>
            <person name="Iida K."/>
            <person name="Akiyama K."/>
            <person name="Satou M."/>
            <person name="Toyoda T."/>
            <person name="Konagaya A."/>
            <person name="Carninci P."/>
            <person name="Kawai J."/>
            <person name="Hayashizaki Y."/>
            <person name="Shinozaki K."/>
        </authorList>
    </citation>
    <scope>NUCLEOTIDE SEQUENCE [LARGE SCALE MRNA]</scope>
    <source>
        <strain>cv. Columbia</strain>
    </source>
</reference>
<reference key="7">
    <citation type="journal article" date="2018" name="New Phytol.">
        <title>Arabidopsis ACYL-COA-BINDING PROTEIN1 interacts with STEROL C4-METHYL OXIDASE1-2 to modulate gene expression of homeodomain-leucine zipper IV transcription factors.</title>
        <authorList>
            <person name="Lung S.-C."/>
            <person name="Liao P."/>
            <person name="Yeung E.C."/>
            <person name="Hsiao A.-S."/>
            <person name="Xue Y."/>
            <person name="Chye M.-L."/>
        </authorList>
    </citation>
    <scope>FUNCTION</scope>
    <scope>DISRUPTION PHENOTYPE</scope>
    <scope>INTERACTION WITH ACBP1</scope>
    <scope>TISSUE SPECIFICITY</scope>
    <scope>SUBCELLULAR LOCATION</scope>
    <scope>DEVELOPMENTAL STAGE</scope>
    <source>
        <strain>cv. Columbia</strain>
    </source>
</reference>
<reference key="8">
    <citation type="journal article" date="2019" name="Plant Physiol.">
        <title>The SMO1 family of sterol 4alpha-methyl oxidases is essential for auxin- and cytokinin-regulated embryogenesis.</title>
        <authorList>
            <person name="Song J."/>
            <person name="Sun S."/>
            <person name="Ren H."/>
            <person name="Grison M."/>
            <person name="Boutte Y."/>
            <person name="Bai W."/>
            <person name="Men S."/>
        </authorList>
    </citation>
    <scope>FUNCTION</scope>
    <scope>DISRUPTION PHENOTYPE</scope>
    <scope>SUBCELLULAR LOCATION</scope>
    <scope>TISSUE SPECIFICITY</scope>
    <scope>DEVELOPMENTAL STAGE</scope>
    <source>
        <strain>cv. Columbia</strain>
        <strain>cv. Landsberg erecta</strain>
        <strain>cv. Wassilewskija</strain>
    </source>
</reference>
<gene>
    <name evidence="6" type="primary">SMO1-2</name>
    <name evidence="8" type="ordered locus">At4g22756</name>
    <name evidence="9" type="ORF">T12H17</name>
</gene>
<feature type="chain" id="PRO_0000413162" description="Methylsterol monooxygenase 1-2">
    <location>
        <begin position="1"/>
        <end position="299"/>
    </location>
</feature>
<feature type="transmembrane region" description="Helical" evidence="3">
    <location>
        <begin position="39"/>
        <end position="59"/>
    </location>
</feature>
<feature type="transmembrane region" description="Helical" evidence="3">
    <location>
        <begin position="96"/>
        <end position="116"/>
    </location>
</feature>
<feature type="transmembrane region" description="Helical" evidence="3">
    <location>
        <begin position="118"/>
        <end position="138"/>
    </location>
</feature>
<feature type="transmembrane region" description="Helical" evidence="3">
    <location>
        <begin position="189"/>
        <end position="209"/>
    </location>
</feature>
<feature type="domain" description="Fatty acid hydroxylase" evidence="3">
    <location>
        <begin position="132"/>
        <end position="267"/>
    </location>
</feature>
<feature type="short sequence motif" description="Histidine box-1" evidence="1">
    <location>
        <begin position="147"/>
        <end position="151"/>
    </location>
</feature>
<feature type="short sequence motif" description="Histidine box-2" evidence="1">
    <location>
        <begin position="160"/>
        <end position="164"/>
    </location>
</feature>
<feature type="short sequence motif" description="Histidine box-3" evidence="1">
    <location>
        <begin position="239"/>
        <end position="245"/>
    </location>
</feature>
<feature type="sequence conflict" description="In Ref. 4; AAM65428." evidence="7" ref="4">
    <original>FIESS</original>
    <variation>LIESA</variation>
    <location>
        <begin position="58"/>
        <end position="62"/>
    </location>
</feature>
<feature type="sequence conflict" description="In Ref. 4; AAM65428." evidence="7" ref="4">
    <original>F</original>
    <variation>L</variation>
    <location>
        <position position="86"/>
    </location>
</feature>
<feature type="sequence conflict" description="In Ref. 1; AAK61361." evidence="7" ref="1">
    <original>F</original>
    <variation>S</variation>
    <location>
        <position position="96"/>
    </location>
</feature>
<feature type="sequence conflict" description="In Ref. 4; AAM65428." evidence="7" ref="4">
    <original>L</original>
    <variation>F</variation>
    <location>
        <position position="132"/>
    </location>
</feature>
<proteinExistence type="evidence at protein level"/>
<name>SMO12_ARATH</name>
<comment type="function">
    <text evidence="2 4 5">Non-heme iron oxygenase involved in sterols biosynthesis by catalyzing the removal of the first methyl group at the C-4 position (By similarity). 4,4-dimethyl-9-beta,19-cyclopropylsterols such as 24-methylenecycloartanol are the preferred substrates (By similarity). Acts as a rate-limiting enzyme in the sterol pathway via interaction with ACBP1; sterols serve as lipid modulators for gene expression of homeodomain-leucine zipper IV transcription factors (PubMed:29288621). Together with SMO1-1, involved in the maintenance of sterol composition to balance auxin and cytokinin activities during embryogenesis (PubMed:31341004).</text>
</comment>
<comment type="catalytic activity">
    <reaction evidence="2">
        <text>4,4-dimethyl-5alpha-cholest-7-en-3beta-ol + 6 Fe(II)-[cytochrome b5] + 3 O2 + 5 H(+) = 4alpha-carboxy-4beta-methyl-5alpha-cholest-7-ene-3beta-ol + 6 Fe(III)-[cytochrome b5] + 4 H2O</text>
        <dbReference type="Rhea" id="RHEA:55220"/>
        <dbReference type="Rhea" id="RHEA-COMP:10438"/>
        <dbReference type="Rhea" id="RHEA-COMP:10439"/>
        <dbReference type="ChEBI" id="CHEBI:15377"/>
        <dbReference type="ChEBI" id="CHEBI:15378"/>
        <dbReference type="ChEBI" id="CHEBI:15379"/>
        <dbReference type="ChEBI" id="CHEBI:16455"/>
        <dbReference type="ChEBI" id="CHEBI:29033"/>
        <dbReference type="ChEBI" id="CHEBI:29034"/>
        <dbReference type="ChEBI" id="CHEBI:58387"/>
        <dbReference type="EC" id="1.14.18.9"/>
    </reaction>
</comment>
<comment type="catalytic activity">
    <reaction evidence="2">
        <text>24-methylenecycloartanol + 6 Fe(II)-[cytochrome b5] + 3 O2 + 5 H(+) = 4alpha-carboxy-4beta,14alpha-dimethyl-9beta,19-cyclo-5alpha-ergost-24(24(1))-en-3beta-ol + 6 Fe(III)-[cytochrome b5] + 4 H2O</text>
        <dbReference type="Rhea" id="RHEA:58832"/>
        <dbReference type="Rhea" id="RHEA-COMP:10438"/>
        <dbReference type="Rhea" id="RHEA-COMP:10439"/>
        <dbReference type="ChEBI" id="CHEBI:1307"/>
        <dbReference type="ChEBI" id="CHEBI:15377"/>
        <dbReference type="ChEBI" id="CHEBI:15378"/>
        <dbReference type="ChEBI" id="CHEBI:15379"/>
        <dbReference type="ChEBI" id="CHEBI:29033"/>
        <dbReference type="ChEBI" id="CHEBI:29034"/>
        <dbReference type="ChEBI" id="CHEBI:142916"/>
        <dbReference type="EC" id="1.14.18.10"/>
    </reaction>
</comment>
<comment type="cofactor">
    <cofactor evidence="1">
        <name>Fe cation</name>
        <dbReference type="ChEBI" id="CHEBI:24875"/>
    </cofactor>
</comment>
<comment type="subunit">
    <text evidence="4">Interacts with ACBP1.</text>
</comment>
<comment type="subcellular location">
    <subcellularLocation>
        <location evidence="4 5">Endoplasmic reticulum membrane</location>
        <topology evidence="3">Multi-pass membrane protein</topology>
    </subcellularLocation>
</comment>
<comment type="tissue specificity">
    <text evidence="4 5">Expressed in embryo sacs, pollen and trichomes (PubMed:29288621). Observed in leaves, roots, siliques and flowers (PubMed:31341004).</text>
</comment>
<comment type="developmental stage">
    <text evidence="4 5">Highly expressed in pollen grains at all floral stages and in pollen tubes at anthesis (PubMed:29288621). Observed in transmitting tracts along pistils, nectaries and ovules, and in the entire pistils at anthesis (PubMed:29288621). In anthers, present in pollen and tapetal cells (PubMed:29288621). Accumulates in imbibed pollen grains and in germinating pollen tubes (PubMed:29288621). Detected in embryo sacs at stages 13-14 (PubMed:29288621). During embryogenesis, expressed from the globular stage to the mature stage in the embryo but not in the endosperm, especially in the embryonic root meristem (PubMed:31341004). Also accumulates in trichomes on rosettes and stems, and the vasculature in roots (PubMed:29288621). In developing seeds, expressed in the basal suspensor cells and chalazal seed coat at the heart stage of embryogenesis, and in the radicle and cotyledons of mature green embryos (PubMed:29288621). In leaves, strongly expressed in vascular tissues (PubMed:31341004). In roots, detected in root tips, mostly in the root stem cell niche and columella cells (PubMed:31341004). In flowers, accumulates in styles, petals and anther filaments (PubMed:31341004). In siliques, present in funiculi (PubMed:31341004).</text>
</comment>
<comment type="domain">
    <text evidence="1">The histidine box domains may contain the active site and/or be involved in metal ion binding.</text>
</comment>
<comment type="disruption phenotype">
    <text evidence="4 5">Double mutants lacking SMO1-2 and ACBP1 are impaired in seed development, embryo sac development, male and female gamete transmission, and pollen function, as well as altered fatty acids (FAs) and sterols profiles (PubMed:29288621). The double mutant smo1-1 smo1-2, which accumulates dramatically 4,4-dimethylsterols, is embryo lethal, with embryo exhibiting severe defects, including no cotyledon or shoot apical meristem formation, abnormal division of suspensor cells, and twin embryos, and is associated with an altered auxin and cytokinin homeostasis (PubMed:31341004).</text>
</comment>
<comment type="miscellaneous">
    <text evidence="7">Requires a membrane-bound cytochrome b5 as an obligatory electron carrier from NAD(P)H to SMO.</text>
</comment>
<comment type="similarity">
    <text evidence="7">Belongs to the sterol desaturase family.</text>
</comment>
<dbReference type="EC" id="1.14.18.10" evidence="2"/>
<dbReference type="EC" id="1.14.18.9" evidence="2"/>
<dbReference type="EMBL" id="AY035393">
    <property type="protein sequence ID" value="AAK61361.1"/>
    <property type="molecule type" value="mRNA"/>
</dbReference>
<dbReference type="EMBL" id="AL021635">
    <property type="status" value="NOT_ANNOTATED_CDS"/>
    <property type="molecule type" value="Genomic_DNA"/>
</dbReference>
<dbReference type="EMBL" id="CP002687">
    <property type="protein sequence ID" value="AEE84653.1"/>
    <property type="molecule type" value="Genomic_DNA"/>
</dbReference>
<dbReference type="EMBL" id="AY087876">
    <property type="protein sequence ID" value="AAM65428.1"/>
    <property type="molecule type" value="mRNA"/>
</dbReference>
<dbReference type="EMBL" id="BT025865">
    <property type="protein sequence ID" value="ABF85767.1"/>
    <property type="molecule type" value="mRNA"/>
</dbReference>
<dbReference type="EMBL" id="AK229338">
    <property type="protein sequence ID" value="BAF01201.1"/>
    <property type="molecule type" value="mRNA"/>
</dbReference>
<dbReference type="RefSeq" id="NP_567670.1">
    <property type="nucleotide sequence ID" value="NM_118404.5"/>
</dbReference>
<dbReference type="BioGRID" id="13663">
    <property type="interactions" value="17"/>
</dbReference>
<dbReference type="FunCoup" id="Q1EC69">
    <property type="interactions" value="1198"/>
</dbReference>
<dbReference type="IntAct" id="Q1EC69">
    <property type="interactions" value="17"/>
</dbReference>
<dbReference type="STRING" id="3702.Q1EC69"/>
<dbReference type="PaxDb" id="3702-AT4G22756.1"/>
<dbReference type="ProteomicsDB" id="234473"/>
<dbReference type="EnsemblPlants" id="AT4G22756.1">
    <property type="protein sequence ID" value="AT4G22756.1"/>
    <property type="gene ID" value="AT4G22756"/>
</dbReference>
<dbReference type="GeneID" id="828374"/>
<dbReference type="Gramene" id="AT4G22756.1">
    <property type="protein sequence ID" value="AT4G22756.1"/>
    <property type="gene ID" value="AT4G22756"/>
</dbReference>
<dbReference type="KEGG" id="ath:AT4G22756"/>
<dbReference type="Araport" id="AT4G22756"/>
<dbReference type="TAIR" id="AT4G22756">
    <property type="gene designation" value="SMO1-2"/>
</dbReference>
<dbReference type="eggNOG" id="KOG0873">
    <property type="taxonomic scope" value="Eukaryota"/>
</dbReference>
<dbReference type="HOGENOM" id="CLU_047036_5_3_1"/>
<dbReference type="InParanoid" id="Q1EC69"/>
<dbReference type="OMA" id="CDIMGDR"/>
<dbReference type="PhylomeDB" id="Q1EC69"/>
<dbReference type="BioCyc" id="ARA:AT4G22756-MONOMER"/>
<dbReference type="BioCyc" id="MetaCyc:AT4G22756-MONOMER"/>
<dbReference type="BRENDA" id="1.14.18.10">
    <property type="organism ID" value="399"/>
</dbReference>
<dbReference type="PRO" id="PR:Q1EC69"/>
<dbReference type="Proteomes" id="UP000006548">
    <property type="component" value="Chromosome 4"/>
</dbReference>
<dbReference type="ExpressionAtlas" id="Q1EC69">
    <property type="expression patterns" value="baseline and differential"/>
</dbReference>
<dbReference type="GO" id="GO:0005783">
    <property type="term" value="C:endoplasmic reticulum"/>
    <property type="evidence" value="ECO:0000314"/>
    <property type="project" value="UniProtKB"/>
</dbReference>
<dbReference type="GO" id="GO:0005789">
    <property type="term" value="C:endoplasmic reticulum membrane"/>
    <property type="evidence" value="ECO:0007669"/>
    <property type="project" value="UniProtKB-SubCell"/>
</dbReference>
<dbReference type="GO" id="GO:0000254">
    <property type="term" value="F:C-4 methylsterol oxidase activity"/>
    <property type="evidence" value="ECO:0000315"/>
    <property type="project" value="TAIR"/>
</dbReference>
<dbReference type="GO" id="GO:0005506">
    <property type="term" value="F:iron ion binding"/>
    <property type="evidence" value="ECO:0007669"/>
    <property type="project" value="InterPro"/>
</dbReference>
<dbReference type="GO" id="GO:0080064">
    <property type="term" value="P:4,4-dimethyl-9beta,19-cyclopropylsterol oxidation"/>
    <property type="evidence" value="ECO:0000303"/>
    <property type="project" value="TAIR"/>
</dbReference>
<dbReference type="GO" id="GO:0055089">
    <property type="term" value="P:fatty acid homeostasis"/>
    <property type="evidence" value="ECO:0000315"/>
    <property type="project" value="UniProtKB"/>
</dbReference>
<dbReference type="GO" id="GO:0016126">
    <property type="term" value="P:sterol biosynthetic process"/>
    <property type="evidence" value="ECO:0000315"/>
    <property type="project" value="TAIR"/>
</dbReference>
<dbReference type="GO" id="GO:0055092">
    <property type="term" value="P:sterol homeostasis"/>
    <property type="evidence" value="ECO:0000315"/>
    <property type="project" value="UniProtKB"/>
</dbReference>
<dbReference type="InterPro" id="IPR006694">
    <property type="entry name" value="Fatty_acid_hydroxylase"/>
</dbReference>
<dbReference type="InterPro" id="IPR050307">
    <property type="entry name" value="Sterol_Desaturase_Related"/>
</dbReference>
<dbReference type="PANTHER" id="PTHR11863">
    <property type="entry name" value="STEROL DESATURASE"/>
    <property type="match status" value="1"/>
</dbReference>
<dbReference type="Pfam" id="PF04116">
    <property type="entry name" value="FA_hydroxylase"/>
    <property type="match status" value="1"/>
</dbReference>
<keyword id="KW-0256">Endoplasmic reticulum</keyword>
<keyword id="KW-0408">Iron</keyword>
<keyword id="KW-0444">Lipid biosynthesis</keyword>
<keyword id="KW-0443">Lipid metabolism</keyword>
<keyword id="KW-0472">Membrane</keyword>
<keyword id="KW-0503">Monooxygenase</keyword>
<keyword id="KW-0560">Oxidoreductase</keyword>
<keyword id="KW-1185">Reference proteome</keyword>
<keyword id="KW-0752">Steroid biosynthesis</keyword>
<keyword id="KW-0753">Steroid metabolism</keyword>
<keyword id="KW-0756">Sterol biosynthesis</keyword>
<keyword id="KW-1207">Sterol metabolism</keyword>
<keyword id="KW-0812">Transmembrane</keyword>
<keyword id="KW-1133">Transmembrane helix</keyword>